<protein>
    <recommendedName>
        <fullName evidence="1">Methylglyoxal synthase</fullName>
        <shortName evidence="1">MGS</shortName>
        <ecNumber evidence="1">4.2.3.3</ecNumber>
    </recommendedName>
</protein>
<name>MGSA_RHIME</name>
<accession>Q92T28</accession>
<gene>
    <name evidence="1" type="primary">mgsA</name>
    <name type="ordered locus">R00158</name>
    <name type="ORF">SMc02834</name>
</gene>
<organism>
    <name type="scientific">Rhizobium meliloti (strain 1021)</name>
    <name type="common">Ensifer meliloti</name>
    <name type="synonym">Sinorhizobium meliloti</name>
    <dbReference type="NCBI Taxonomy" id="266834"/>
    <lineage>
        <taxon>Bacteria</taxon>
        <taxon>Pseudomonadati</taxon>
        <taxon>Pseudomonadota</taxon>
        <taxon>Alphaproteobacteria</taxon>
        <taxon>Hyphomicrobiales</taxon>
        <taxon>Rhizobiaceae</taxon>
        <taxon>Sinorhizobium/Ensifer group</taxon>
        <taxon>Sinorhizobium</taxon>
    </lineage>
</organism>
<evidence type="ECO:0000255" key="1">
    <source>
        <dbReference type="HAMAP-Rule" id="MF_00549"/>
    </source>
</evidence>
<keyword id="KW-0456">Lyase</keyword>
<keyword id="KW-1185">Reference proteome</keyword>
<reference key="1">
    <citation type="journal article" date="2001" name="Proc. Natl. Acad. Sci. U.S.A.">
        <title>Analysis of the chromosome sequence of the legume symbiont Sinorhizobium meliloti strain 1021.</title>
        <authorList>
            <person name="Capela D."/>
            <person name="Barloy-Hubler F."/>
            <person name="Gouzy J."/>
            <person name="Bothe G."/>
            <person name="Ampe F."/>
            <person name="Batut J."/>
            <person name="Boistard P."/>
            <person name="Becker A."/>
            <person name="Boutry M."/>
            <person name="Cadieu E."/>
            <person name="Dreano S."/>
            <person name="Gloux S."/>
            <person name="Godrie T."/>
            <person name="Goffeau A."/>
            <person name="Kahn D."/>
            <person name="Kiss E."/>
            <person name="Lelaure V."/>
            <person name="Masuy D."/>
            <person name="Pohl T."/>
            <person name="Portetelle D."/>
            <person name="Puehler A."/>
            <person name="Purnelle B."/>
            <person name="Ramsperger U."/>
            <person name="Renard C."/>
            <person name="Thebault P."/>
            <person name="Vandenbol M."/>
            <person name="Weidner S."/>
            <person name="Galibert F."/>
        </authorList>
    </citation>
    <scope>NUCLEOTIDE SEQUENCE [LARGE SCALE GENOMIC DNA]</scope>
    <source>
        <strain>1021</strain>
    </source>
</reference>
<reference key="2">
    <citation type="journal article" date="2001" name="Science">
        <title>The composite genome of the legume symbiont Sinorhizobium meliloti.</title>
        <authorList>
            <person name="Galibert F."/>
            <person name="Finan T.M."/>
            <person name="Long S.R."/>
            <person name="Puehler A."/>
            <person name="Abola P."/>
            <person name="Ampe F."/>
            <person name="Barloy-Hubler F."/>
            <person name="Barnett M.J."/>
            <person name="Becker A."/>
            <person name="Boistard P."/>
            <person name="Bothe G."/>
            <person name="Boutry M."/>
            <person name="Bowser L."/>
            <person name="Buhrmester J."/>
            <person name="Cadieu E."/>
            <person name="Capela D."/>
            <person name="Chain P."/>
            <person name="Cowie A."/>
            <person name="Davis R.W."/>
            <person name="Dreano S."/>
            <person name="Federspiel N.A."/>
            <person name="Fisher R.F."/>
            <person name="Gloux S."/>
            <person name="Godrie T."/>
            <person name="Goffeau A."/>
            <person name="Golding B."/>
            <person name="Gouzy J."/>
            <person name="Gurjal M."/>
            <person name="Hernandez-Lucas I."/>
            <person name="Hong A."/>
            <person name="Huizar L."/>
            <person name="Hyman R.W."/>
            <person name="Jones T."/>
            <person name="Kahn D."/>
            <person name="Kahn M.L."/>
            <person name="Kalman S."/>
            <person name="Keating D.H."/>
            <person name="Kiss E."/>
            <person name="Komp C."/>
            <person name="Lelaure V."/>
            <person name="Masuy D."/>
            <person name="Palm C."/>
            <person name="Peck M.C."/>
            <person name="Pohl T.M."/>
            <person name="Portetelle D."/>
            <person name="Purnelle B."/>
            <person name="Ramsperger U."/>
            <person name="Surzycki R."/>
            <person name="Thebault P."/>
            <person name="Vandenbol M."/>
            <person name="Vorhoelter F.J."/>
            <person name="Weidner S."/>
            <person name="Wells D.H."/>
            <person name="Wong K."/>
            <person name="Yeh K.-C."/>
            <person name="Batut J."/>
        </authorList>
    </citation>
    <scope>NUCLEOTIDE SEQUENCE [LARGE SCALE GENOMIC DNA]</scope>
    <source>
        <strain>1021</strain>
    </source>
</reference>
<dbReference type="EC" id="4.2.3.3" evidence="1"/>
<dbReference type="EMBL" id="AL591688">
    <property type="protein sequence ID" value="CAC41545.1"/>
    <property type="molecule type" value="Genomic_DNA"/>
</dbReference>
<dbReference type="RefSeq" id="NP_384264.1">
    <property type="nucleotide sequence ID" value="NC_003047.1"/>
</dbReference>
<dbReference type="RefSeq" id="WP_003531955.1">
    <property type="nucleotide sequence ID" value="NC_003047.1"/>
</dbReference>
<dbReference type="SMR" id="Q92T28"/>
<dbReference type="EnsemblBacteria" id="CAC41545">
    <property type="protein sequence ID" value="CAC41545"/>
    <property type="gene ID" value="SMc02834"/>
</dbReference>
<dbReference type="KEGG" id="sme:SMc02834"/>
<dbReference type="PATRIC" id="fig|266834.11.peg.1519"/>
<dbReference type="eggNOG" id="COG1803">
    <property type="taxonomic scope" value="Bacteria"/>
</dbReference>
<dbReference type="HOGENOM" id="CLU_120420_1_0_5"/>
<dbReference type="OrthoDB" id="9787147at2"/>
<dbReference type="Proteomes" id="UP000001976">
    <property type="component" value="Chromosome"/>
</dbReference>
<dbReference type="GO" id="GO:0005829">
    <property type="term" value="C:cytosol"/>
    <property type="evidence" value="ECO:0007669"/>
    <property type="project" value="TreeGrafter"/>
</dbReference>
<dbReference type="GO" id="GO:0008929">
    <property type="term" value="F:methylglyoxal synthase activity"/>
    <property type="evidence" value="ECO:0007669"/>
    <property type="project" value="UniProtKB-UniRule"/>
</dbReference>
<dbReference type="GO" id="GO:0019242">
    <property type="term" value="P:methylglyoxal biosynthetic process"/>
    <property type="evidence" value="ECO:0007669"/>
    <property type="project" value="UniProtKB-UniRule"/>
</dbReference>
<dbReference type="CDD" id="cd01422">
    <property type="entry name" value="MGS"/>
    <property type="match status" value="1"/>
</dbReference>
<dbReference type="Gene3D" id="3.40.50.1380">
    <property type="entry name" value="Methylglyoxal synthase-like domain"/>
    <property type="match status" value="1"/>
</dbReference>
<dbReference type="HAMAP" id="MF_00549">
    <property type="entry name" value="Methylglyoxal_synth"/>
    <property type="match status" value="1"/>
</dbReference>
<dbReference type="InterPro" id="IPR004363">
    <property type="entry name" value="Methylgl_synth"/>
</dbReference>
<dbReference type="InterPro" id="IPR018148">
    <property type="entry name" value="Methylglyoxal_synth_AS"/>
</dbReference>
<dbReference type="InterPro" id="IPR011607">
    <property type="entry name" value="MGS-like_dom"/>
</dbReference>
<dbReference type="InterPro" id="IPR036914">
    <property type="entry name" value="MGS-like_dom_sf"/>
</dbReference>
<dbReference type="NCBIfam" id="TIGR00160">
    <property type="entry name" value="MGSA"/>
    <property type="match status" value="1"/>
</dbReference>
<dbReference type="NCBIfam" id="NF003559">
    <property type="entry name" value="PRK05234.1"/>
    <property type="match status" value="1"/>
</dbReference>
<dbReference type="PANTHER" id="PTHR30492">
    <property type="entry name" value="METHYLGLYOXAL SYNTHASE"/>
    <property type="match status" value="1"/>
</dbReference>
<dbReference type="PANTHER" id="PTHR30492:SF0">
    <property type="entry name" value="METHYLGLYOXAL SYNTHASE"/>
    <property type="match status" value="1"/>
</dbReference>
<dbReference type="Pfam" id="PF02142">
    <property type="entry name" value="MGS"/>
    <property type="match status" value="1"/>
</dbReference>
<dbReference type="PIRSF" id="PIRSF006614">
    <property type="entry name" value="Methylglyox_syn"/>
    <property type="match status" value="1"/>
</dbReference>
<dbReference type="SMART" id="SM00851">
    <property type="entry name" value="MGS"/>
    <property type="match status" value="1"/>
</dbReference>
<dbReference type="SUPFAM" id="SSF52335">
    <property type="entry name" value="Methylglyoxal synthase-like"/>
    <property type="match status" value="1"/>
</dbReference>
<dbReference type="PROSITE" id="PS01335">
    <property type="entry name" value="METHYLGLYOXAL_SYNTH"/>
    <property type="match status" value="1"/>
</dbReference>
<dbReference type="PROSITE" id="PS51855">
    <property type="entry name" value="MGS"/>
    <property type="match status" value="1"/>
</dbReference>
<proteinExistence type="inferred from homology"/>
<comment type="function">
    <text evidence="1">Catalyzes the formation of methylglyoxal from dihydroxyacetone phosphate.</text>
</comment>
<comment type="catalytic activity">
    <reaction evidence="1">
        <text>dihydroxyacetone phosphate = methylglyoxal + phosphate</text>
        <dbReference type="Rhea" id="RHEA:17937"/>
        <dbReference type="ChEBI" id="CHEBI:17158"/>
        <dbReference type="ChEBI" id="CHEBI:43474"/>
        <dbReference type="ChEBI" id="CHEBI:57642"/>
        <dbReference type="EC" id="4.2.3.3"/>
    </reaction>
</comment>
<comment type="similarity">
    <text evidence="1">Belongs to the methylglyoxal synthase family.</text>
</comment>
<sequence>MADRKCLALIAHDQKKDDLAAFAKANEAVLSKWKIVATGTTGGRVLDVCPALDIVRLKSGPLGGDQQIGALIATGDVDCLIFFVDPLTAMPHDVDVKALMRLAIVYDIPMALNRATAEQLIDFRRN</sequence>
<feature type="chain" id="PRO_0000178643" description="Methylglyoxal synthase">
    <location>
        <begin position="1"/>
        <end position="126"/>
    </location>
</feature>
<feature type="domain" description="MGS-like" evidence="1">
    <location>
        <begin position="1"/>
        <end position="126"/>
    </location>
</feature>
<feature type="active site" description="Proton donor/acceptor" evidence="1">
    <location>
        <position position="65"/>
    </location>
</feature>
<feature type="binding site" evidence="1">
    <location>
        <position position="12"/>
    </location>
    <ligand>
        <name>substrate</name>
    </ligand>
</feature>
<feature type="binding site" evidence="1">
    <location>
        <position position="16"/>
    </location>
    <ligand>
        <name>substrate</name>
    </ligand>
</feature>
<feature type="binding site" evidence="1">
    <location>
        <begin position="38"/>
        <end position="41"/>
    </location>
    <ligand>
        <name>substrate</name>
    </ligand>
</feature>
<feature type="binding site" evidence="1">
    <location>
        <begin position="59"/>
        <end position="60"/>
    </location>
    <ligand>
        <name>substrate</name>
    </ligand>
</feature>
<feature type="binding site" evidence="1">
    <location>
        <position position="92"/>
    </location>
    <ligand>
        <name>substrate</name>
    </ligand>
</feature>